<dbReference type="EC" id="2.1.2.10" evidence="1"/>
<dbReference type="EMBL" id="CP000703">
    <property type="protein sequence ID" value="ABQ49388.1"/>
    <property type="molecule type" value="Genomic_DNA"/>
</dbReference>
<dbReference type="RefSeq" id="WP_000093349.1">
    <property type="nucleotide sequence ID" value="NC_009487.1"/>
</dbReference>
<dbReference type="SMR" id="A5IT65"/>
<dbReference type="KEGG" id="saj:SaurJH9_1595"/>
<dbReference type="HOGENOM" id="CLU_007884_10_2_9"/>
<dbReference type="GO" id="GO:0005829">
    <property type="term" value="C:cytosol"/>
    <property type="evidence" value="ECO:0007669"/>
    <property type="project" value="TreeGrafter"/>
</dbReference>
<dbReference type="GO" id="GO:0005960">
    <property type="term" value="C:glycine cleavage complex"/>
    <property type="evidence" value="ECO:0007669"/>
    <property type="project" value="InterPro"/>
</dbReference>
<dbReference type="GO" id="GO:0004047">
    <property type="term" value="F:aminomethyltransferase activity"/>
    <property type="evidence" value="ECO:0007669"/>
    <property type="project" value="UniProtKB-UniRule"/>
</dbReference>
<dbReference type="GO" id="GO:0008483">
    <property type="term" value="F:transaminase activity"/>
    <property type="evidence" value="ECO:0007669"/>
    <property type="project" value="UniProtKB-KW"/>
</dbReference>
<dbReference type="GO" id="GO:0019464">
    <property type="term" value="P:glycine decarboxylation via glycine cleavage system"/>
    <property type="evidence" value="ECO:0007669"/>
    <property type="project" value="UniProtKB-UniRule"/>
</dbReference>
<dbReference type="FunFam" id="2.40.30.110:FF:000007">
    <property type="entry name" value="Aminomethyltransferase"/>
    <property type="match status" value="1"/>
</dbReference>
<dbReference type="FunFam" id="3.30.70.1400:FF:000001">
    <property type="entry name" value="Aminomethyltransferase"/>
    <property type="match status" value="1"/>
</dbReference>
<dbReference type="FunFam" id="4.10.1250.10:FF:000001">
    <property type="entry name" value="Aminomethyltransferase"/>
    <property type="match status" value="1"/>
</dbReference>
<dbReference type="Gene3D" id="2.40.30.110">
    <property type="entry name" value="Aminomethyltransferase beta-barrel domains"/>
    <property type="match status" value="1"/>
</dbReference>
<dbReference type="Gene3D" id="3.30.70.1400">
    <property type="entry name" value="Aminomethyltransferase beta-barrel domains"/>
    <property type="match status" value="1"/>
</dbReference>
<dbReference type="Gene3D" id="4.10.1250.10">
    <property type="entry name" value="Aminomethyltransferase fragment"/>
    <property type="match status" value="1"/>
</dbReference>
<dbReference type="Gene3D" id="3.30.1360.120">
    <property type="entry name" value="Probable tRNA modification gtpase trme, domain 1"/>
    <property type="match status" value="1"/>
</dbReference>
<dbReference type="HAMAP" id="MF_00259">
    <property type="entry name" value="GcvT"/>
    <property type="match status" value="1"/>
</dbReference>
<dbReference type="InterPro" id="IPR006223">
    <property type="entry name" value="GCS_T"/>
</dbReference>
<dbReference type="InterPro" id="IPR022903">
    <property type="entry name" value="GCS_T_bac"/>
</dbReference>
<dbReference type="InterPro" id="IPR013977">
    <property type="entry name" value="GCST_C"/>
</dbReference>
<dbReference type="InterPro" id="IPR006222">
    <property type="entry name" value="GCV_T_N"/>
</dbReference>
<dbReference type="InterPro" id="IPR028896">
    <property type="entry name" value="GcvT/YgfZ/DmdA"/>
</dbReference>
<dbReference type="InterPro" id="IPR029043">
    <property type="entry name" value="GcvT/YgfZ_C"/>
</dbReference>
<dbReference type="InterPro" id="IPR027266">
    <property type="entry name" value="TrmE/GcvT_dom1"/>
</dbReference>
<dbReference type="NCBIfam" id="TIGR00528">
    <property type="entry name" value="gcvT"/>
    <property type="match status" value="1"/>
</dbReference>
<dbReference type="NCBIfam" id="NF001567">
    <property type="entry name" value="PRK00389.1"/>
    <property type="match status" value="1"/>
</dbReference>
<dbReference type="PANTHER" id="PTHR43757">
    <property type="entry name" value="AMINOMETHYLTRANSFERASE"/>
    <property type="match status" value="1"/>
</dbReference>
<dbReference type="PANTHER" id="PTHR43757:SF2">
    <property type="entry name" value="AMINOMETHYLTRANSFERASE, MITOCHONDRIAL"/>
    <property type="match status" value="1"/>
</dbReference>
<dbReference type="Pfam" id="PF01571">
    <property type="entry name" value="GCV_T"/>
    <property type="match status" value="1"/>
</dbReference>
<dbReference type="Pfam" id="PF08669">
    <property type="entry name" value="GCV_T_C"/>
    <property type="match status" value="1"/>
</dbReference>
<dbReference type="PIRSF" id="PIRSF006487">
    <property type="entry name" value="GcvT"/>
    <property type="match status" value="1"/>
</dbReference>
<dbReference type="SUPFAM" id="SSF101790">
    <property type="entry name" value="Aminomethyltransferase beta-barrel domain"/>
    <property type="match status" value="1"/>
</dbReference>
<dbReference type="SUPFAM" id="SSF103025">
    <property type="entry name" value="Folate-binding domain"/>
    <property type="match status" value="1"/>
</dbReference>
<accession>A5IT65</accession>
<comment type="function">
    <text evidence="1">The glycine cleavage system catalyzes the degradation of glycine.</text>
</comment>
<comment type="catalytic activity">
    <reaction evidence="1">
        <text>N(6)-[(R)-S(8)-aminomethyldihydrolipoyl]-L-lysyl-[protein] + (6S)-5,6,7,8-tetrahydrofolate = N(6)-[(R)-dihydrolipoyl]-L-lysyl-[protein] + (6R)-5,10-methylene-5,6,7,8-tetrahydrofolate + NH4(+)</text>
        <dbReference type="Rhea" id="RHEA:16945"/>
        <dbReference type="Rhea" id="RHEA-COMP:10475"/>
        <dbReference type="Rhea" id="RHEA-COMP:10492"/>
        <dbReference type="ChEBI" id="CHEBI:15636"/>
        <dbReference type="ChEBI" id="CHEBI:28938"/>
        <dbReference type="ChEBI" id="CHEBI:57453"/>
        <dbReference type="ChEBI" id="CHEBI:83100"/>
        <dbReference type="ChEBI" id="CHEBI:83143"/>
        <dbReference type="EC" id="2.1.2.10"/>
    </reaction>
</comment>
<comment type="subunit">
    <text evidence="1">The glycine cleavage system is composed of four proteins: P, T, L and H.</text>
</comment>
<comment type="similarity">
    <text evidence="1">Belongs to the GcvT family.</text>
</comment>
<keyword id="KW-0032">Aminotransferase</keyword>
<keyword id="KW-0808">Transferase</keyword>
<feature type="chain" id="PRO_1000078596" description="Aminomethyltransferase">
    <location>
        <begin position="1"/>
        <end position="363"/>
    </location>
</feature>
<proteinExistence type="inferred from homology"/>
<reference key="1">
    <citation type="submission" date="2007-05" db="EMBL/GenBank/DDBJ databases">
        <title>Complete sequence of chromosome of Staphylococcus aureus subsp. aureus JH9.</title>
        <authorList>
            <consortium name="US DOE Joint Genome Institute"/>
            <person name="Copeland A."/>
            <person name="Lucas S."/>
            <person name="Lapidus A."/>
            <person name="Barry K."/>
            <person name="Detter J.C."/>
            <person name="Glavina del Rio T."/>
            <person name="Hammon N."/>
            <person name="Israni S."/>
            <person name="Pitluck S."/>
            <person name="Chain P."/>
            <person name="Malfatti S."/>
            <person name="Shin M."/>
            <person name="Vergez L."/>
            <person name="Schmutz J."/>
            <person name="Larimer F."/>
            <person name="Land M."/>
            <person name="Hauser L."/>
            <person name="Kyrpides N."/>
            <person name="Kim E."/>
            <person name="Tomasz A."/>
            <person name="Richardson P."/>
        </authorList>
    </citation>
    <scope>NUCLEOTIDE SEQUENCE [LARGE SCALE GENOMIC DNA]</scope>
    <source>
        <strain>JH9</strain>
    </source>
</reference>
<name>GCST_STAA9</name>
<protein>
    <recommendedName>
        <fullName evidence="1">Aminomethyltransferase</fullName>
        <ecNumber evidence="1">2.1.2.10</ecNumber>
    </recommendedName>
    <alternativeName>
        <fullName evidence="1">Glycine cleavage system T protein</fullName>
    </alternativeName>
</protein>
<organism>
    <name type="scientific">Staphylococcus aureus (strain JH9)</name>
    <dbReference type="NCBI Taxonomy" id="359786"/>
    <lineage>
        <taxon>Bacteria</taxon>
        <taxon>Bacillati</taxon>
        <taxon>Bacillota</taxon>
        <taxon>Bacilli</taxon>
        <taxon>Bacillales</taxon>
        <taxon>Staphylococcaceae</taxon>
        <taxon>Staphylococcus</taxon>
    </lineage>
</organism>
<gene>
    <name evidence="1" type="primary">gcvT</name>
    <name type="ordered locus">SaurJH9_1595</name>
</gene>
<evidence type="ECO:0000255" key="1">
    <source>
        <dbReference type="HAMAP-Rule" id="MF_00259"/>
    </source>
</evidence>
<sequence length="363" mass="40458">MSSDLKQTPLYQNYVDRGAKIVEFGGWAMPVQFSSIKEEHNAVRYEIGLFDVSHMGEIEVTGKDASQFVQYLLSNDTDNLTTSKALYTALCNEEGGIIDDLVIYKLADDNYLLVVNAANTEKDFNWILKHKEKFDVEVQNVSNQYGQLAIQGPKARDLINQLVDEDVTEMKMFEFKQGVKLFGANVILSQSGYTGEDGFEIYCNIDDTEKIWDGLLEYNVMPCGLGARDTLRLEAGLPLHGQDLTESITPYEGGIAFASKPLIDADFIGKSVLKDQKENGAPRRTVGLELLEKGIARTGYEVMDLDGNIIGEVTSGTQSPSSGKSIALAMIKRDEFEMGRELLVQVRKRQLKAKIVKKNQIDK</sequence>